<organism>
    <name type="scientific">Leptospira biflexa serovar Patoc (strain Patoc 1 / Ames)</name>
    <dbReference type="NCBI Taxonomy" id="355278"/>
    <lineage>
        <taxon>Bacteria</taxon>
        <taxon>Pseudomonadati</taxon>
        <taxon>Spirochaetota</taxon>
        <taxon>Spirochaetia</taxon>
        <taxon>Leptospirales</taxon>
        <taxon>Leptospiraceae</taxon>
        <taxon>Leptospira</taxon>
    </lineage>
</organism>
<proteinExistence type="inferred from homology"/>
<protein>
    <recommendedName>
        <fullName evidence="1">ATP synthase subunit b</fullName>
    </recommendedName>
    <alternativeName>
        <fullName evidence="1">ATP synthase F(0) sector subunit b</fullName>
    </alternativeName>
    <alternativeName>
        <fullName evidence="1">ATPase subunit I</fullName>
    </alternativeName>
    <alternativeName>
        <fullName evidence="1">F-type ATPase subunit b</fullName>
        <shortName evidence="1">F-ATPase subunit b</shortName>
    </alternativeName>
</protein>
<dbReference type="EMBL" id="CP000777">
    <property type="protein sequence ID" value="ABZ93306.1"/>
    <property type="molecule type" value="Genomic_DNA"/>
</dbReference>
<dbReference type="RefSeq" id="WP_012387816.1">
    <property type="nucleotide sequence ID" value="NC_010842.1"/>
</dbReference>
<dbReference type="SMR" id="B0SDA1"/>
<dbReference type="KEGG" id="lbf:LBF_0774"/>
<dbReference type="HOGENOM" id="CLU_079215_4_1_12"/>
<dbReference type="GO" id="GO:0005886">
    <property type="term" value="C:plasma membrane"/>
    <property type="evidence" value="ECO:0007669"/>
    <property type="project" value="UniProtKB-SubCell"/>
</dbReference>
<dbReference type="GO" id="GO:0045259">
    <property type="term" value="C:proton-transporting ATP synthase complex"/>
    <property type="evidence" value="ECO:0007669"/>
    <property type="project" value="UniProtKB-KW"/>
</dbReference>
<dbReference type="GO" id="GO:0046933">
    <property type="term" value="F:proton-transporting ATP synthase activity, rotational mechanism"/>
    <property type="evidence" value="ECO:0007669"/>
    <property type="project" value="UniProtKB-UniRule"/>
</dbReference>
<dbReference type="GO" id="GO:0046961">
    <property type="term" value="F:proton-transporting ATPase activity, rotational mechanism"/>
    <property type="evidence" value="ECO:0007669"/>
    <property type="project" value="TreeGrafter"/>
</dbReference>
<dbReference type="CDD" id="cd06503">
    <property type="entry name" value="ATP-synt_Fo_b"/>
    <property type="match status" value="1"/>
</dbReference>
<dbReference type="Gene3D" id="1.20.5.620">
    <property type="entry name" value="F1F0 ATP synthase subunit B, membrane domain"/>
    <property type="match status" value="1"/>
</dbReference>
<dbReference type="HAMAP" id="MF_01398">
    <property type="entry name" value="ATP_synth_b_bprime"/>
    <property type="match status" value="1"/>
</dbReference>
<dbReference type="InterPro" id="IPR028987">
    <property type="entry name" value="ATP_synth_B-like_membr_sf"/>
</dbReference>
<dbReference type="InterPro" id="IPR002146">
    <property type="entry name" value="ATP_synth_b/b'su_bac/chlpt"/>
</dbReference>
<dbReference type="InterPro" id="IPR005864">
    <property type="entry name" value="ATP_synth_F0_bsu_bac"/>
</dbReference>
<dbReference type="InterPro" id="IPR050059">
    <property type="entry name" value="ATP_synthase_B_chain"/>
</dbReference>
<dbReference type="NCBIfam" id="TIGR01144">
    <property type="entry name" value="ATP_synt_b"/>
    <property type="match status" value="1"/>
</dbReference>
<dbReference type="NCBIfam" id="NF009991">
    <property type="entry name" value="PRK13460.1"/>
    <property type="match status" value="1"/>
</dbReference>
<dbReference type="PANTHER" id="PTHR33445:SF1">
    <property type="entry name" value="ATP SYNTHASE SUBUNIT B"/>
    <property type="match status" value="1"/>
</dbReference>
<dbReference type="PANTHER" id="PTHR33445">
    <property type="entry name" value="ATP SYNTHASE SUBUNIT B', CHLOROPLASTIC"/>
    <property type="match status" value="1"/>
</dbReference>
<dbReference type="Pfam" id="PF00430">
    <property type="entry name" value="ATP-synt_B"/>
    <property type="match status" value="1"/>
</dbReference>
<dbReference type="SUPFAM" id="SSF81573">
    <property type="entry name" value="F1F0 ATP synthase subunit B, membrane domain"/>
    <property type="match status" value="1"/>
</dbReference>
<name>ATPF_LEPBA</name>
<comment type="function">
    <text evidence="1">F(1)F(0) ATP synthase produces ATP from ADP in the presence of a proton or sodium gradient. F-type ATPases consist of two structural domains, F(1) containing the extramembraneous catalytic core and F(0) containing the membrane proton channel, linked together by a central stalk and a peripheral stalk. During catalysis, ATP synthesis in the catalytic domain of F(1) is coupled via a rotary mechanism of the central stalk subunits to proton translocation.</text>
</comment>
<comment type="function">
    <text evidence="1">Component of the F(0) channel, it forms part of the peripheral stalk, linking F(1) to F(0).</text>
</comment>
<comment type="subunit">
    <text evidence="1">F-type ATPases have 2 components, F(1) - the catalytic core - and F(0) - the membrane proton channel. F(1) has five subunits: alpha(3), beta(3), gamma(1), delta(1), epsilon(1). F(0) has three main subunits: a(1), b(2) and c(10-14). The alpha and beta chains form an alternating ring which encloses part of the gamma chain. F(1) is attached to F(0) by a central stalk formed by the gamma and epsilon chains, while a peripheral stalk is formed by the delta and b chains.</text>
</comment>
<comment type="subcellular location">
    <subcellularLocation>
        <location evidence="1">Cell inner membrane</location>
        <topology evidence="1">Single-pass membrane protein</topology>
    </subcellularLocation>
</comment>
<comment type="similarity">
    <text evidence="1">Belongs to the ATPase B chain family.</text>
</comment>
<gene>
    <name evidence="1" type="primary">atpF</name>
    <name type="ordered locus">LBF_0774</name>
</gene>
<reference key="1">
    <citation type="journal article" date="2008" name="PLoS ONE">
        <title>Genome sequence of the saprophyte Leptospira biflexa provides insights into the evolution of Leptospira and the pathogenesis of leptospirosis.</title>
        <authorList>
            <person name="Picardeau M."/>
            <person name="Bulach D.M."/>
            <person name="Bouchier C."/>
            <person name="Zuerner R.L."/>
            <person name="Zidane N."/>
            <person name="Wilson P.J."/>
            <person name="Creno S."/>
            <person name="Kuczek E.S."/>
            <person name="Bommezzadri S."/>
            <person name="Davis J.C."/>
            <person name="McGrath A."/>
            <person name="Johnson M.J."/>
            <person name="Boursaux-Eude C."/>
            <person name="Seemann T."/>
            <person name="Rouy Z."/>
            <person name="Coppel R.L."/>
            <person name="Rood J.I."/>
            <person name="Lajus A."/>
            <person name="Davies J.K."/>
            <person name="Medigue C."/>
            <person name="Adler B."/>
        </authorList>
    </citation>
    <scope>NUCLEOTIDE SEQUENCE [LARGE SCALE GENOMIC DNA]</scope>
    <source>
        <strain>Patoc 1 / Ames</strain>
    </source>
</reference>
<evidence type="ECO:0000255" key="1">
    <source>
        <dbReference type="HAMAP-Rule" id="MF_01398"/>
    </source>
</evidence>
<feature type="chain" id="PRO_0000368558" description="ATP synthase subunit b">
    <location>
        <begin position="1"/>
        <end position="174"/>
    </location>
</feature>
<feature type="transmembrane region" description="Helical" evidence="1">
    <location>
        <begin position="15"/>
        <end position="33"/>
    </location>
</feature>
<keyword id="KW-0066">ATP synthesis</keyword>
<keyword id="KW-0997">Cell inner membrane</keyword>
<keyword id="KW-1003">Cell membrane</keyword>
<keyword id="KW-0138">CF(0)</keyword>
<keyword id="KW-0375">Hydrogen ion transport</keyword>
<keyword id="KW-0406">Ion transport</keyword>
<keyword id="KW-0472">Membrane</keyword>
<keyword id="KW-0812">Transmembrane</keyword>
<keyword id="KW-1133">Transmembrane helix</keyword>
<keyword id="KW-0813">Transport</keyword>
<accession>B0SDA1</accession>
<sequence length="174" mass="19602">MVLLAASGFNLLKVNPGLVIWTLVTFSVVVFVLKKFAWDKILHALEERASGIQGDINKAESLRVEAEKSLKEYKDQLFKATEEAHRIVDEAKKDAVALRTKLTEEAHNEVKGIKDSAVREIELAKGRALSEIQNQIVEMSVLIASEILEKQLKKEDYASFVEKEIAKLDKLKIK</sequence>